<sequence>MTFQLHAPFAPCGDQPEAIARLSAGVRNQVKSQVLLGTTGSGKTFTIANVVANVNLPTLVLAHNKTLAAQLYQEFREFFPNNAVEYFISYYDYYQPEAYIARSDTYIEKSLLINDEIDKLRLSATRSILERRDTLIVSSVSCIYGIGSPENYTSMALVLEVGKEYPRNILTAQLVKMHYQASPIPQRSAFRERGSVIDIFPAYESELALRLEFLNDTLTSIEYSDPLTMIPKESVPSATLYPGSHYVIPEAIREQAIRTIQEELEERMAFFDDRPIEKDRIFHRTTHDIEMIKEIGFCKGIENYSRHFTGAPPGAPPTCLLDYFPEDFLLIIDESHQTLPQIRAMYRGDQSRKQSLVEYGFRLPSAFDNRPLTYEEAQKYFRKVIYVSATPGDTEVQESSGHIVQQIIRPTGIPDPMPEIRPATGQVDDLLEEIRLRLSQKHEKILVISITKKLAEDMAGFLSELEIPAAYLHSGIETAERTQILTDLRSGVIDVLIGVNLLREGLDLPEVSLVAILDADKEGFLRSTSSLIQFCGRAARNINGKVIFYADQKTRSIEETLRETERRRQIQLDYNKEHNIVPKPIIKAIFANPILQTSKDSESPKESQRPLSKEDLEEQIKKYEALMQRAAKEFRFNEAAKYRDAMQACKEQLLYLF</sequence>
<comment type="function">
    <text evidence="1">The UvrABC repair system catalyzes the recognition and processing of DNA lesions. A damage recognition complex composed of 2 UvrA and 2 UvrB subunits scans DNA for abnormalities. Upon binding of the UvrA(2)B(2) complex to a putative damaged site, the DNA wraps around one UvrB monomer. DNA wrap is dependent on ATP binding by UvrB and probably causes local melting of the DNA helix, facilitating insertion of UvrB beta-hairpin between the DNA strands. Then UvrB probes one DNA strand for the presence of a lesion. If a lesion is found the UvrA subunits dissociate and the UvrB-DNA preincision complex is formed. This complex is subsequently bound by UvrC and the second UvrB is released. If no lesion is found, the DNA wraps around the other UvrB subunit that will check the other stand for damage.</text>
</comment>
<comment type="subunit">
    <text evidence="1">Forms a heterotetramer with UvrA during the search for lesions. Interacts with UvrC in an incision complex.</text>
</comment>
<comment type="subcellular location">
    <subcellularLocation>
        <location evidence="1">Cytoplasm</location>
    </subcellularLocation>
</comment>
<comment type="domain">
    <text evidence="1">The beta-hairpin motif is involved in DNA binding.</text>
</comment>
<comment type="similarity">
    <text evidence="1">Belongs to the UvrB family.</text>
</comment>
<proteinExistence type="inferred from homology"/>
<evidence type="ECO:0000255" key="1">
    <source>
        <dbReference type="HAMAP-Rule" id="MF_00204"/>
    </source>
</evidence>
<name>UVRB_CHLPN</name>
<organism>
    <name type="scientific">Chlamydia pneumoniae</name>
    <name type="common">Chlamydophila pneumoniae</name>
    <dbReference type="NCBI Taxonomy" id="83558"/>
    <lineage>
        <taxon>Bacteria</taxon>
        <taxon>Pseudomonadati</taxon>
        <taxon>Chlamydiota</taxon>
        <taxon>Chlamydiia</taxon>
        <taxon>Chlamydiales</taxon>
        <taxon>Chlamydiaceae</taxon>
        <taxon>Chlamydia/Chlamydophila group</taxon>
        <taxon>Chlamydia</taxon>
    </lineage>
</organism>
<protein>
    <recommendedName>
        <fullName evidence="1">UvrABC system protein B</fullName>
        <shortName evidence="1">Protein UvrB</shortName>
    </recommendedName>
    <alternativeName>
        <fullName evidence="1">Excinuclease ABC subunit B</fullName>
    </alternativeName>
</protein>
<gene>
    <name evidence="1" type="primary">uvrB</name>
    <name type="ordered locus">CPn_0801</name>
    <name type="ordered locus">CP_1070</name>
    <name type="ordered locus">CpB0830</name>
</gene>
<feature type="chain" id="PRO_0000138386" description="UvrABC system protein B">
    <location>
        <begin position="1"/>
        <end position="657"/>
    </location>
</feature>
<feature type="domain" description="Helicase ATP-binding" evidence="1">
    <location>
        <begin position="24"/>
        <end position="409"/>
    </location>
</feature>
<feature type="domain" description="Helicase C-terminal" evidence="1">
    <location>
        <begin position="426"/>
        <end position="589"/>
    </location>
</feature>
<feature type="domain" description="UVR" evidence="1">
    <location>
        <begin position="617"/>
        <end position="652"/>
    </location>
</feature>
<feature type="short sequence motif" description="Beta-hairpin">
    <location>
        <begin position="90"/>
        <end position="113"/>
    </location>
</feature>
<feature type="binding site" evidence="1">
    <location>
        <begin position="37"/>
        <end position="44"/>
    </location>
    <ligand>
        <name>ATP</name>
        <dbReference type="ChEBI" id="CHEBI:30616"/>
    </ligand>
</feature>
<accession>Q9Z7A5</accession>
<accession>Q9JQE7</accession>
<keyword id="KW-0067">ATP-binding</keyword>
<keyword id="KW-0963">Cytoplasm</keyword>
<keyword id="KW-0227">DNA damage</keyword>
<keyword id="KW-0228">DNA excision</keyword>
<keyword id="KW-0234">DNA repair</keyword>
<keyword id="KW-0267">Excision nuclease</keyword>
<keyword id="KW-0547">Nucleotide-binding</keyword>
<keyword id="KW-0742">SOS response</keyword>
<dbReference type="EMBL" id="AE001363">
    <property type="protein sequence ID" value="AAD18939.1"/>
    <property type="molecule type" value="Genomic_DNA"/>
</dbReference>
<dbReference type="EMBL" id="AE002161">
    <property type="protein sequence ID" value="AAF38842.1"/>
    <property type="molecule type" value="Genomic_DNA"/>
</dbReference>
<dbReference type="EMBL" id="BA000008">
    <property type="protein sequence ID" value="BAA99009.1"/>
    <property type="molecule type" value="Genomic_DNA"/>
</dbReference>
<dbReference type="EMBL" id="AE009440">
    <property type="protein sequence ID" value="AAP98759.1"/>
    <property type="molecule type" value="Genomic_DNA"/>
</dbReference>
<dbReference type="PIR" id="B72034">
    <property type="entry name" value="B72034"/>
</dbReference>
<dbReference type="PIR" id="G86590">
    <property type="entry name" value="G86590"/>
</dbReference>
<dbReference type="RefSeq" id="NP_224996.1">
    <property type="nucleotide sequence ID" value="NC_000922.1"/>
</dbReference>
<dbReference type="RefSeq" id="WP_010883438.1">
    <property type="nucleotide sequence ID" value="NZ_LN847257.1"/>
</dbReference>
<dbReference type="SMR" id="Q9Z7A5"/>
<dbReference type="STRING" id="406984.CPK_ORF00209"/>
<dbReference type="GeneID" id="45050856"/>
<dbReference type="KEGG" id="cpa:CP_1070"/>
<dbReference type="KEGG" id="cpj:uvrB"/>
<dbReference type="KEGG" id="cpn:CPn_0801"/>
<dbReference type="KEGG" id="cpt:CpB0830"/>
<dbReference type="PATRIC" id="fig|115713.3.peg.880"/>
<dbReference type="eggNOG" id="COG0556">
    <property type="taxonomic scope" value="Bacteria"/>
</dbReference>
<dbReference type="HOGENOM" id="CLU_009621_2_1_0"/>
<dbReference type="OrthoDB" id="9806651at2"/>
<dbReference type="Proteomes" id="UP000000583">
    <property type="component" value="Chromosome"/>
</dbReference>
<dbReference type="Proteomes" id="UP000000801">
    <property type="component" value="Chromosome"/>
</dbReference>
<dbReference type="GO" id="GO:0005737">
    <property type="term" value="C:cytoplasm"/>
    <property type="evidence" value="ECO:0007669"/>
    <property type="project" value="UniProtKB-SubCell"/>
</dbReference>
<dbReference type="GO" id="GO:0009380">
    <property type="term" value="C:excinuclease repair complex"/>
    <property type="evidence" value="ECO:0007669"/>
    <property type="project" value="InterPro"/>
</dbReference>
<dbReference type="GO" id="GO:0005524">
    <property type="term" value="F:ATP binding"/>
    <property type="evidence" value="ECO:0007669"/>
    <property type="project" value="UniProtKB-UniRule"/>
</dbReference>
<dbReference type="GO" id="GO:0016887">
    <property type="term" value="F:ATP hydrolysis activity"/>
    <property type="evidence" value="ECO:0007669"/>
    <property type="project" value="InterPro"/>
</dbReference>
<dbReference type="GO" id="GO:0003677">
    <property type="term" value="F:DNA binding"/>
    <property type="evidence" value="ECO:0007669"/>
    <property type="project" value="UniProtKB-UniRule"/>
</dbReference>
<dbReference type="GO" id="GO:0009381">
    <property type="term" value="F:excinuclease ABC activity"/>
    <property type="evidence" value="ECO:0007669"/>
    <property type="project" value="UniProtKB-UniRule"/>
</dbReference>
<dbReference type="GO" id="GO:0006289">
    <property type="term" value="P:nucleotide-excision repair"/>
    <property type="evidence" value="ECO:0007669"/>
    <property type="project" value="UniProtKB-UniRule"/>
</dbReference>
<dbReference type="GO" id="GO:0009432">
    <property type="term" value="P:SOS response"/>
    <property type="evidence" value="ECO:0007669"/>
    <property type="project" value="UniProtKB-UniRule"/>
</dbReference>
<dbReference type="CDD" id="cd17916">
    <property type="entry name" value="DEXHc_UvrB"/>
    <property type="match status" value="1"/>
</dbReference>
<dbReference type="CDD" id="cd18790">
    <property type="entry name" value="SF2_C_UvrB"/>
    <property type="match status" value="1"/>
</dbReference>
<dbReference type="Gene3D" id="3.40.50.300">
    <property type="entry name" value="P-loop containing nucleotide triphosphate hydrolases"/>
    <property type="match status" value="3"/>
</dbReference>
<dbReference type="Gene3D" id="4.10.860.10">
    <property type="entry name" value="UVR domain"/>
    <property type="match status" value="1"/>
</dbReference>
<dbReference type="HAMAP" id="MF_00204">
    <property type="entry name" value="UvrB"/>
    <property type="match status" value="1"/>
</dbReference>
<dbReference type="InterPro" id="IPR006935">
    <property type="entry name" value="Helicase/UvrB_N"/>
</dbReference>
<dbReference type="InterPro" id="IPR014001">
    <property type="entry name" value="Helicase_ATP-bd"/>
</dbReference>
<dbReference type="InterPro" id="IPR001650">
    <property type="entry name" value="Helicase_C-like"/>
</dbReference>
<dbReference type="InterPro" id="IPR027417">
    <property type="entry name" value="P-loop_NTPase"/>
</dbReference>
<dbReference type="InterPro" id="IPR001943">
    <property type="entry name" value="UVR_dom"/>
</dbReference>
<dbReference type="InterPro" id="IPR036876">
    <property type="entry name" value="UVR_dom_sf"/>
</dbReference>
<dbReference type="InterPro" id="IPR004807">
    <property type="entry name" value="UvrB"/>
</dbReference>
<dbReference type="InterPro" id="IPR041471">
    <property type="entry name" value="UvrB_inter"/>
</dbReference>
<dbReference type="InterPro" id="IPR024759">
    <property type="entry name" value="UvrB_YAD/RRR_dom"/>
</dbReference>
<dbReference type="NCBIfam" id="NF003673">
    <property type="entry name" value="PRK05298.1"/>
    <property type="match status" value="1"/>
</dbReference>
<dbReference type="NCBIfam" id="TIGR00631">
    <property type="entry name" value="uvrb"/>
    <property type="match status" value="1"/>
</dbReference>
<dbReference type="PANTHER" id="PTHR24029">
    <property type="entry name" value="UVRABC SYSTEM PROTEIN B"/>
    <property type="match status" value="1"/>
</dbReference>
<dbReference type="PANTHER" id="PTHR24029:SF0">
    <property type="entry name" value="UVRABC SYSTEM PROTEIN B"/>
    <property type="match status" value="1"/>
</dbReference>
<dbReference type="Pfam" id="PF00271">
    <property type="entry name" value="Helicase_C"/>
    <property type="match status" value="1"/>
</dbReference>
<dbReference type="Pfam" id="PF04851">
    <property type="entry name" value="ResIII"/>
    <property type="match status" value="1"/>
</dbReference>
<dbReference type="Pfam" id="PF02151">
    <property type="entry name" value="UVR"/>
    <property type="match status" value="1"/>
</dbReference>
<dbReference type="Pfam" id="PF12344">
    <property type="entry name" value="UvrB"/>
    <property type="match status" value="1"/>
</dbReference>
<dbReference type="Pfam" id="PF17757">
    <property type="entry name" value="UvrB_inter"/>
    <property type="match status" value="1"/>
</dbReference>
<dbReference type="SMART" id="SM00487">
    <property type="entry name" value="DEXDc"/>
    <property type="match status" value="1"/>
</dbReference>
<dbReference type="SMART" id="SM00490">
    <property type="entry name" value="HELICc"/>
    <property type="match status" value="1"/>
</dbReference>
<dbReference type="SUPFAM" id="SSF46600">
    <property type="entry name" value="C-terminal UvrC-binding domain of UvrB"/>
    <property type="match status" value="1"/>
</dbReference>
<dbReference type="SUPFAM" id="SSF52540">
    <property type="entry name" value="P-loop containing nucleoside triphosphate hydrolases"/>
    <property type="match status" value="2"/>
</dbReference>
<dbReference type="PROSITE" id="PS51192">
    <property type="entry name" value="HELICASE_ATP_BIND_1"/>
    <property type="match status" value="1"/>
</dbReference>
<dbReference type="PROSITE" id="PS51194">
    <property type="entry name" value="HELICASE_CTER"/>
    <property type="match status" value="1"/>
</dbReference>
<dbReference type="PROSITE" id="PS50151">
    <property type="entry name" value="UVR"/>
    <property type="match status" value="1"/>
</dbReference>
<reference key="1">
    <citation type="journal article" date="1999" name="Nat. Genet.">
        <title>Comparative genomes of Chlamydia pneumoniae and C. trachomatis.</title>
        <authorList>
            <person name="Kalman S."/>
            <person name="Mitchell W.P."/>
            <person name="Marathe R."/>
            <person name="Lammel C.J."/>
            <person name="Fan J."/>
            <person name="Hyman R.W."/>
            <person name="Olinger L."/>
            <person name="Grimwood J."/>
            <person name="Davis R.W."/>
            <person name="Stephens R.S."/>
        </authorList>
    </citation>
    <scope>NUCLEOTIDE SEQUENCE [LARGE SCALE GENOMIC DNA]</scope>
    <source>
        <strain>CWL029</strain>
    </source>
</reference>
<reference key="2">
    <citation type="journal article" date="2000" name="Nucleic Acids Res.">
        <title>Genome sequences of Chlamydia trachomatis MoPn and Chlamydia pneumoniae AR39.</title>
        <authorList>
            <person name="Read T.D."/>
            <person name="Brunham R.C."/>
            <person name="Shen C."/>
            <person name="Gill S.R."/>
            <person name="Heidelberg J.F."/>
            <person name="White O."/>
            <person name="Hickey E.K."/>
            <person name="Peterson J.D."/>
            <person name="Utterback T.R."/>
            <person name="Berry K.J."/>
            <person name="Bass S."/>
            <person name="Linher K.D."/>
            <person name="Weidman J.F."/>
            <person name="Khouri H.M."/>
            <person name="Craven B."/>
            <person name="Bowman C."/>
            <person name="Dodson R.J."/>
            <person name="Gwinn M.L."/>
            <person name="Nelson W.C."/>
            <person name="DeBoy R.T."/>
            <person name="Kolonay J.F."/>
            <person name="McClarty G."/>
            <person name="Salzberg S.L."/>
            <person name="Eisen J.A."/>
            <person name="Fraser C.M."/>
        </authorList>
    </citation>
    <scope>NUCLEOTIDE SEQUENCE [LARGE SCALE GENOMIC DNA]</scope>
    <source>
        <strain>AR39</strain>
    </source>
</reference>
<reference key="3">
    <citation type="journal article" date="2000" name="Nucleic Acids Res.">
        <title>Comparison of whole genome sequences of Chlamydia pneumoniae J138 from Japan and CWL029 from USA.</title>
        <authorList>
            <person name="Shirai M."/>
            <person name="Hirakawa H."/>
            <person name="Kimoto M."/>
            <person name="Tabuchi M."/>
            <person name="Kishi F."/>
            <person name="Ouchi K."/>
            <person name="Shiba T."/>
            <person name="Ishii K."/>
            <person name="Hattori M."/>
            <person name="Kuhara S."/>
            <person name="Nakazawa T."/>
        </authorList>
    </citation>
    <scope>NUCLEOTIDE SEQUENCE [LARGE SCALE GENOMIC DNA]</scope>
    <source>
        <strain>J138</strain>
    </source>
</reference>
<reference key="4">
    <citation type="submission" date="2002-05" db="EMBL/GenBank/DDBJ databases">
        <title>The genome sequence of Chlamydia pneumoniae TW183 and comparison with other Chlamydia strains based on whole genome sequence analysis.</title>
        <authorList>
            <person name="Geng M.M."/>
            <person name="Schuhmacher A."/>
            <person name="Muehldorfer I."/>
            <person name="Bensch K.W."/>
            <person name="Schaefer K.P."/>
            <person name="Schneider S."/>
            <person name="Pohl T."/>
            <person name="Essig A."/>
            <person name="Marre R."/>
            <person name="Melchers K."/>
        </authorList>
    </citation>
    <scope>NUCLEOTIDE SEQUENCE [LARGE SCALE GENOMIC DNA]</scope>
    <source>
        <strain>TW-183</strain>
    </source>
</reference>